<dbReference type="EMBL" id="X72627">
    <property type="status" value="NOT_ANNOTATED_CDS"/>
    <property type="molecule type" value="Genomic_DNA"/>
</dbReference>
<dbReference type="EMBL" id="BA000022">
    <property type="protein sequence ID" value="BAA17421.1"/>
    <property type="molecule type" value="Genomic_DNA"/>
</dbReference>
<dbReference type="PIR" id="S77318">
    <property type="entry name" value="S77318"/>
</dbReference>
<dbReference type="SMR" id="P38382"/>
<dbReference type="STRING" id="1148.gene:10498284"/>
<dbReference type="PaxDb" id="1148-1652500"/>
<dbReference type="EnsemblBacteria" id="BAA17421">
    <property type="protein sequence ID" value="BAA17421"/>
    <property type="gene ID" value="BAA17421"/>
</dbReference>
<dbReference type="KEGG" id="syn:ssl3335"/>
<dbReference type="eggNOG" id="COG0690">
    <property type="taxonomic scope" value="Bacteria"/>
</dbReference>
<dbReference type="InParanoid" id="P38382"/>
<dbReference type="Proteomes" id="UP000001425">
    <property type="component" value="Chromosome"/>
</dbReference>
<dbReference type="GO" id="GO:0005886">
    <property type="term" value="C:plasma membrane"/>
    <property type="evidence" value="ECO:0000318"/>
    <property type="project" value="GO_Central"/>
</dbReference>
<dbReference type="GO" id="GO:0031676">
    <property type="term" value="C:plasma membrane-derived thylakoid membrane"/>
    <property type="evidence" value="ECO:0007669"/>
    <property type="project" value="UniProtKB-SubCell"/>
</dbReference>
<dbReference type="GO" id="GO:0008320">
    <property type="term" value="F:protein transmembrane transporter activity"/>
    <property type="evidence" value="ECO:0000318"/>
    <property type="project" value="GO_Central"/>
</dbReference>
<dbReference type="GO" id="GO:0065002">
    <property type="term" value="P:intracellular protein transmembrane transport"/>
    <property type="evidence" value="ECO:0007669"/>
    <property type="project" value="UniProtKB-UniRule"/>
</dbReference>
<dbReference type="GO" id="GO:0009306">
    <property type="term" value="P:protein secretion"/>
    <property type="evidence" value="ECO:0007669"/>
    <property type="project" value="UniProtKB-UniRule"/>
</dbReference>
<dbReference type="GO" id="GO:0006605">
    <property type="term" value="P:protein targeting"/>
    <property type="evidence" value="ECO:0007669"/>
    <property type="project" value="UniProtKB-UniRule"/>
</dbReference>
<dbReference type="GO" id="GO:0043952">
    <property type="term" value="P:protein transport by the Sec complex"/>
    <property type="evidence" value="ECO:0000318"/>
    <property type="project" value="GO_Central"/>
</dbReference>
<dbReference type="Gene3D" id="1.20.5.1030">
    <property type="entry name" value="Preprotein translocase secy subunit"/>
    <property type="match status" value="1"/>
</dbReference>
<dbReference type="HAMAP" id="MF_00422">
    <property type="entry name" value="SecE"/>
    <property type="match status" value="1"/>
</dbReference>
<dbReference type="InterPro" id="IPR005807">
    <property type="entry name" value="SecE_bac"/>
</dbReference>
<dbReference type="InterPro" id="IPR038379">
    <property type="entry name" value="SecE_sf"/>
</dbReference>
<dbReference type="InterPro" id="IPR001901">
    <property type="entry name" value="Translocase_SecE/Sec61-g"/>
</dbReference>
<dbReference type="NCBIfam" id="TIGR00964">
    <property type="entry name" value="secE_bact"/>
    <property type="match status" value="1"/>
</dbReference>
<dbReference type="PANTHER" id="PTHR33910">
    <property type="entry name" value="PROTEIN TRANSLOCASE SUBUNIT SECE"/>
    <property type="match status" value="1"/>
</dbReference>
<dbReference type="PANTHER" id="PTHR33910:SF1">
    <property type="entry name" value="PROTEIN TRANSLOCASE SUBUNIT SECE"/>
    <property type="match status" value="1"/>
</dbReference>
<dbReference type="Pfam" id="PF00584">
    <property type="entry name" value="SecE"/>
    <property type="match status" value="1"/>
</dbReference>
<dbReference type="PROSITE" id="PS01067">
    <property type="entry name" value="SECE_SEC61G"/>
    <property type="match status" value="1"/>
</dbReference>
<sequence>MVKKEAVRTDSTEDNSVDNVQARSNFIAATKDELAKVVWPSRQQLISESVAVILMVILVSTVIYFVDQIFGWITKQPFLFG</sequence>
<proteinExistence type="inferred from homology"/>
<name>SECE_SYNY3</name>
<organism>
    <name type="scientific">Synechocystis sp. (strain ATCC 27184 / PCC 6803 / Kazusa)</name>
    <dbReference type="NCBI Taxonomy" id="1111708"/>
    <lineage>
        <taxon>Bacteria</taxon>
        <taxon>Bacillati</taxon>
        <taxon>Cyanobacteriota</taxon>
        <taxon>Cyanophyceae</taxon>
        <taxon>Synechococcales</taxon>
        <taxon>Merismopediaceae</taxon>
        <taxon>Synechocystis</taxon>
    </lineage>
</organism>
<comment type="function">
    <text evidence="1">Essential subunit of the Sec protein translocation channel SecYEG. Clamps together the 2 halves of SecY. May contact the channel plug during translocation.</text>
</comment>
<comment type="subunit">
    <text evidence="1">Component of the Sec protein translocase complex. Heterotrimer consisting of SecY, SecE and SecG subunits. The heterotrimers can form oligomers, although 1 heterotrimer is thought to be able to translocate proteins. Interacts with the ribosome. Interacts with SecDF, and other proteins may be involved. Interacts with SecA.</text>
</comment>
<comment type="subcellular location">
    <subcellularLocation>
        <location evidence="1">Cell inner membrane</location>
        <topology evidence="1">Single-pass membrane protein</topology>
    </subcellularLocation>
    <subcellularLocation>
        <location evidence="1">Cellular thylakoid membrane</location>
        <topology evidence="1">Single-pass membrane protein</topology>
    </subcellularLocation>
</comment>
<comment type="similarity">
    <text evidence="1">Belongs to the SecE/SEC61-gamma family.</text>
</comment>
<feature type="chain" id="PRO_0000104188" description="Protein translocase subunit SecE">
    <location>
        <begin position="1"/>
        <end position="81"/>
    </location>
</feature>
<feature type="transmembrane region" description="Helical" evidence="1">
    <location>
        <begin position="50"/>
        <end position="70"/>
    </location>
</feature>
<evidence type="ECO:0000255" key="1">
    <source>
        <dbReference type="HAMAP-Rule" id="MF_00422"/>
    </source>
</evidence>
<reference key="1">
    <citation type="journal article" date="1993" name="Nucleic Acids Res.">
        <title>Sequence of the cyanobacterial tRNA(w) gene in Synechocystis PCC 6803: requirement of enzymatic 3' CCA attachment to the acceptor stem.</title>
        <authorList>
            <person name="Schmidt J."/>
            <person name="Subramanian A.R."/>
        </authorList>
    </citation>
    <scope>NUCLEOTIDE SEQUENCE [GENOMIC DNA]</scope>
</reference>
<reference key="2">
    <citation type="journal article" date="1996" name="DNA Res.">
        <title>Sequence analysis of the genome of the unicellular cyanobacterium Synechocystis sp. strain PCC6803. II. Sequence determination of the entire genome and assignment of potential protein-coding regions.</title>
        <authorList>
            <person name="Kaneko T."/>
            <person name="Sato S."/>
            <person name="Kotani H."/>
            <person name="Tanaka A."/>
            <person name="Asamizu E."/>
            <person name="Nakamura Y."/>
            <person name="Miyajima N."/>
            <person name="Hirosawa M."/>
            <person name="Sugiura M."/>
            <person name="Sasamoto S."/>
            <person name="Kimura T."/>
            <person name="Hosouchi T."/>
            <person name="Matsuno A."/>
            <person name="Muraki A."/>
            <person name="Nakazaki N."/>
            <person name="Naruo K."/>
            <person name="Okumura S."/>
            <person name="Shimpo S."/>
            <person name="Takeuchi C."/>
            <person name="Wada T."/>
            <person name="Watanabe A."/>
            <person name="Yamada M."/>
            <person name="Yasuda M."/>
            <person name="Tabata S."/>
        </authorList>
    </citation>
    <scope>NUCLEOTIDE SEQUENCE [LARGE SCALE GENOMIC DNA]</scope>
    <source>
        <strain>ATCC 27184 / PCC 6803 / Kazusa</strain>
    </source>
</reference>
<gene>
    <name evidence="1" type="primary">secE</name>
    <name type="ordered locus">ssl3335</name>
</gene>
<protein>
    <recommendedName>
        <fullName evidence="1">Protein translocase subunit SecE</fullName>
    </recommendedName>
</protein>
<accession>P38382</accession>
<keyword id="KW-0997">Cell inner membrane</keyword>
<keyword id="KW-1003">Cell membrane</keyword>
<keyword id="KW-0472">Membrane</keyword>
<keyword id="KW-0653">Protein transport</keyword>
<keyword id="KW-1185">Reference proteome</keyword>
<keyword id="KW-0793">Thylakoid</keyword>
<keyword id="KW-0811">Translocation</keyword>
<keyword id="KW-0812">Transmembrane</keyword>
<keyword id="KW-1133">Transmembrane helix</keyword>
<keyword id="KW-0813">Transport</keyword>